<gene>
    <name evidence="5" type="primary">MTCL3</name>
    <name type="synonym">C6orf174</name>
    <name type="synonym">SOGA3</name>
</gene>
<evidence type="ECO:0000250" key="1">
    <source>
        <dbReference type="UniProtKB" id="Q6NZL0"/>
    </source>
</evidence>
<evidence type="ECO:0000255" key="2"/>
<evidence type="ECO:0000256" key="3">
    <source>
        <dbReference type="SAM" id="MobiDB-lite"/>
    </source>
</evidence>
<evidence type="ECO:0000305" key="4"/>
<evidence type="ECO:0000312" key="5">
    <source>
        <dbReference type="HGNC" id="HGNC:21494"/>
    </source>
</evidence>
<name>MTCL3_HUMAN</name>
<protein>
    <recommendedName>
        <fullName evidence="4">Microtubule cross-linking factor 3</fullName>
    </recommendedName>
</protein>
<dbReference type="EMBL" id="AL096711">
    <property type="status" value="NOT_ANNOTATED_CDS"/>
    <property type="molecule type" value="Genomic_DNA"/>
</dbReference>
<dbReference type="CCDS" id="CCDS43505.1"/>
<dbReference type="RefSeq" id="NP_001012279.1">
    <property type="nucleotide sequence ID" value="NM_001012279.2"/>
</dbReference>
<dbReference type="RefSeq" id="NP_001387194.1">
    <property type="nucleotide sequence ID" value="NM_001400265.1"/>
</dbReference>
<dbReference type="SMR" id="Q5TF21"/>
<dbReference type="BioGRID" id="132241">
    <property type="interactions" value="29"/>
</dbReference>
<dbReference type="FunCoup" id="Q5TF21">
    <property type="interactions" value="152"/>
</dbReference>
<dbReference type="IntAct" id="Q5TF21">
    <property type="interactions" value="35"/>
</dbReference>
<dbReference type="MINT" id="Q5TF21"/>
<dbReference type="STRING" id="9606.ENSP00000434570"/>
<dbReference type="GlyGen" id="Q5TF21">
    <property type="glycosylation" value="2 sites, 1 O-linked glycan (2 sites)"/>
</dbReference>
<dbReference type="iPTMnet" id="Q5TF21"/>
<dbReference type="PhosphoSitePlus" id="Q5TF21"/>
<dbReference type="BioMuta" id="SOGA3"/>
<dbReference type="DMDM" id="74746351"/>
<dbReference type="jPOST" id="Q5TF21"/>
<dbReference type="MassIVE" id="Q5TF21"/>
<dbReference type="PaxDb" id="9606-ENSP00000434570"/>
<dbReference type="PeptideAtlas" id="Q5TF21"/>
<dbReference type="ProteomicsDB" id="65069"/>
<dbReference type="Antibodypedia" id="49821">
    <property type="antibodies" value="42 antibodies from 8 providers"/>
</dbReference>
<dbReference type="DNASU" id="387104"/>
<dbReference type="Ensembl" id="ENST00000525778.6">
    <property type="protein sequence ID" value="ENSP00000434570.1"/>
    <property type="gene ID" value="ENSG00000214338.11"/>
</dbReference>
<dbReference type="GeneID" id="387104"/>
<dbReference type="MANE-Select" id="ENST00000525778.6">
    <property type="protein sequence ID" value="ENSP00000434570.1"/>
    <property type="RefSeq nucleotide sequence ID" value="NM_001400265.1"/>
    <property type="RefSeq protein sequence ID" value="NP_001387194.1"/>
</dbReference>
<dbReference type="UCSC" id="uc003qbd.3">
    <property type="organism name" value="human"/>
</dbReference>
<dbReference type="AGR" id="HGNC:21494"/>
<dbReference type="GeneCards" id="MTCL3"/>
<dbReference type="HGNC" id="HGNC:21494">
    <property type="gene designation" value="MTCL3"/>
</dbReference>
<dbReference type="HPA" id="ENSG00000214338">
    <property type="expression patterns" value="Tissue enhanced (brain)"/>
</dbReference>
<dbReference type="MalaCards" id="MTCL3"/>
<dbReference type="neXtProt" id="NX_Q5TF21"/>
<dbReference type="OpenTargets" id="ENSG00000214338"/>
<dbReference type="OpenTargets" id="ENSG00000255330"/>
<dbReference type="PharmGKB" id="PA134983080"/>
<dbReference type="VEuPathDB" id="HostDB:ENSG00000214338"/>
<dbReference type="eggNOG" id="KOG4787">
    <property type="taxonomic scope" value="Eukaryota"/>
</dbReference>
<dbReference type="GeneTree" id="ENSGT00950000182982"/>
<dbReference type="HOGENOM" id="CLU_013722_0_0_1"/>
<dbReference type="InParanoid" id="Q5TF21"/>
<dbReference type="OMA" id="HMIDIRI"/>
<dbReference type="OrthoDB" id="10036174at2759"/>
<dbReference type="PAN-GO" id="Q5TF21">
    <property type="GO annotations" value="0 GO annotations based on evolutionary models"/>
</dbReference>
<dbReference type="PhylomeDB" id="Q5TF21"/>
<dbReference type="TreeFam" id="TF331853"/>
<dbReference type="PathwayCommons" id="Q5TF21"/>
<dbReference type="SignaLink" id="Q5TF21"/>
<dbReference type="BioGRID-ORCS" id="387104">
    <property type="hits" value="17 hits in 1139 CRISPR screens"/>
</dbReference>
<dbReference type="CD-CODE" id="DEE660B4">
    <property type="entry name" value="Stress granule"/>
</dbReference>
<dbReference type="CD-CODE" id="FB4E32DD">
    <property type="entry name" value="Presynaptic clusters and postsynaptic densities"/>
</dbReference>
<dbReference type="ChiTaRS" id="SOGA3">
    <property type="organism name" value="human"/>
</dbReference>
<dbReference type="GenomeRNAi" id="387104"/>
<dbReference type="Pharos" id="Q5TF21">
    <property type="development level" value="Tdark"/>
</dbReference>
<dbReference type="PRO" id="PR:Q5TF21"/>
<dbReference type="Proteomes" id="UP000005640">
    <property type="component" value="Chromosome 6"/>
</dbReference>
<dbReference type="RNAct" id="Q5TF21">
    <property type="molecule type" value="protein"/>
</dbReference>
<dbReference type="Bgee" id="ENSG00000214338">
    <property type="expression patterns" value="Expressed in ganglionic eminence and 98 other cell types or tissues"/>
</dbReference>
<dbReference type="ExpressionAtlas" id="Q5TF21">
    <property type="expression patterns" value="baseline and differential"/>
</dbReference>
<dbReference type="GO" id="GO:0005615">
    <property type="term" value="C:extracellular space"/>
    <property type="evidence" value="ECO:0007669"/>
    <property type="project" value="InterPro"/>
</dbReference>
<dbReference type="GO" id="GO:0016020">
    <property type="term" value="C:membrane"/>
    <property type="evidence" value="ECO:0007669"/>
    <property type="project" value="UniProtKB-SubCell"/>
</dbReference>
<dbReference type="GO" id="GO:0010506">
    <property type="term" value="P:regulation of autophagy"/>
    <property type="evidence" value="ECO:0007669"/>
    <property type="project" value="InterPro"/>
</dbReference>
<dbReference type="InterPro" id="IPR049885">
    <property type="entry name" value="MTCL1-3"/>
</dbReference>
<dbReference type="InterPro" id="IPR027881">
    <property type="entry name" value="SOGA_CC"/>
</dbReference>
<dbReference type="PANTHER" id="PTHR15742">
    <property type="entry name" value="GIRDIN"/>
    <property type="match status" value="1"/>
</dbReference>
<dbReference type="PANTHER" id="PTHR15742:SF2">
    <property type="entry name" value="PROTEIN SOGA3"/>
    <property type="match status" value="1"/>
</dbReference>
<dbReference type="Pfam" id="PF11365">
    <property type="entry name" value="SOGA"/>
    <property type="match status" value="2"/>
</dbReference>
<sequence length="947" mass="103199">MSQPPIGGAAPATAAASPAAAATEARLHPEGSSRKQQRAQSPARPRDSSLRQTIAATRSPVGAGTKLNSVRQQQLQQQQQQGNKTGSRTGPPASIRGGGGGAEKATPLAPKGAAPGAVQPVAGAEAAPAATLAALGGRRPGPPEEPPRELESVPSKLGEPPPLGEGGGGGGEGGGAGGGSGEREGGAPQPPPPRGWRGKGVRAQQRGGSGGEGASPSPSSSSAGKTPGTGSRNSGSGVAGGGSGGGGSYWKEGCLQSELIQFHLKKERAAAAAAAAQMHAKNGGGSSSRSSPVSGPPAVCETLAVASASPMAAAAEGPQQSAEGSASGGGMQAAAPPSSQPHPQQLQEQEEMQEEMEKLREENETLKNEIDELRTEMDEMRDTFFEEDACQLQEMRHELERANKNCRILQYRLRKAERKRLRYAQTGEIDGELLRSLEQDLKVAKDVSVRLHHELENVEEKRTTTEDENEKLRQQLIEVEIAKQALQNELEKMKELSLKRRGSKDLPKSEKKAQQTPTEEDNEDLKCQLQFVKEEAALMRKKMAKIDKEKDRFEHELQKYRSFYGDLDSPLPKGEAGGPPSTREAELKLRLRLVEEEANILGRKIVELEVENRGLKAELDDLRGDDFNGSANPLMREQSESLSELRQHLQLVEDETELLRRNVADLEEQNKRITAELNKYKYKSGGHDSARHHDNAKTEALQEELKAARLQINELSGKVMQLQYENRVLMSNMQRYDLASHLGIRGSPRDSDAESDAGKKESDDDSRPPHRKREGPIGGESDSEEVRNIRCLTPTRSFYPAPGPWPKSFSDRQQMKDIRSEAERLGKTIDRLIADTSTIITEARIYVANGDLFGLMDEEDDGSRIREHELLYRINAQMKAFRKELQTFIDRLEVPKSADDRGAEEPISVSQMFQPIILLILILVLFSSLSYTTIFKLVFLFTLFFVL</sequence>
<reference key="1">
    <citation type="journal article" date="2003" name="Nature">
        <title>The DNA sequence and analysis of human chromosome 6.</title>
        <authorList>
            <person name="Mungall A.J."/>
            <person name="Palmer S.A."/>
            <person name="Sims S.K."/>
            <person name="Edwards C.A."/>
            <person name="Ashurst J.L."/>
            <person name="Wilming L."/>
            <person name="Jones M.C."/>
            <person name="Horton R."/>
            <person name="Hunt S.E."/>
            <person name="Scott C.E."/>
            <person name="Gilbert J.G.R."/>
            <person name="Clamp M.E."/>
            <person name="Bethel G."/>
            <person name="Milne S."/>
            <person name="Ainscough R."/>
            <person name="Almeida J.P."/>
            <person name="Ambrose K.D."/>
            <person name="Andrews T.D."/>
            <person name="Ashwell R.I.S."/>
            <person name="Babbage A.K."/>
            <person name="Bagguley C.L."/>
            <person name="Bailey J."/>
            <person name="Banerjee R."/>
            <person name="Barker D.J."/>
            <person name="Barlow K.F."/>
            <person name="Bates K."/>
            <person name="Beare D.M."/>
            <person name="Beasley H."/>
            <person name="Beasley O."/>
            <person name="Bird C.P."/>
            <person name="Blakey S.E."/>
            <person name="Bray-Allen S."/>
            <person name="Brook J."/>
            <person name="Brown A.J."/>
            <person name="Brown J.Y."/>
            <person name="Burford D.C."/>
            <person name="Burrill W."/>
            <person name="Burton J."/>
            <person name="Carder C."/>
            <person name="Carter N.P."/>
            <person name="Chapman J.C."/>
            <person name="Clark S.Y."/>
            <person name="Clark G."/>
            <person name="Clee C.M."/>
            <person name="Clegg S."/>
            <person name="Cobley V."/>
            <person name="Collier R.E."/>
            <person name="Collins J.E."/>
            <person name="Colman L.K."/>
            <person name="Corby N.R."/>
            <person name="Coville G.J."/>
            <person name="Culley K.M."/>
            <person name="Dhami P."/>
            <person name="Davies J."/>
            <person name="Dunn M."/>
            <person name="Earthrowl M.E."/>
            <person name="Ellington A.E."/>
            <person name="Evans K.A."/>
            <person name="Faulkner L."/>
            <person name="Francis M.D."/>
            <person name="Frankish A."/>
            <person name="Frankland J."/>
            <person name="French L."/>
            <person name="Garner P."/>
            <person name="Garnett J."/>
            <person name="Ghori M.J."/>
            <person name="Gilby L.M."/>
            <person name="Gillson C.J."/>
            <person name="Glithero R.J."/>
            <person name="Grafham D.V."/>
            <person name="Grant M."/>
            <person name="Gribble S."/>
            <person name="Griffiths C."/>
            <person name="Griffiths M.N.D."/>
            <person name="Hall R."/>
            <person name="Halls K.S."/>
            <person name="Hammond S."/>
            <person name="Harley J.L."/>
            <person name="Hart E.A."/>
            <person name="Heath P.D."/>
            <person name="Heathcott R."/>
            <person name="Holmes S.J."/>
            <person name="Howden P.J."/>
            <person name="Howe K.L."/>
            <person name="Howell G.R."/>
            <person name="Huckle E."/>
            <person name="Humphray S.J."/>
            <person name="Humphries M.D."/>
            <person name="Hunt A.R."/>
            <person name="Johnson C.M."/>
            <person name="Joy A.A."/>
            <person name="Kay M."/>
            <person name="Keenan S.J."/>
            <person name="Kimberley A.M."/>
            <person name="King A."/>
            <person name="Laird G.K."/>
            <person name="Langford C."/>
            <person name="Lawlor S."/>
            <person name="Leongamornlert D.A."/>
            <person name="Leversha M."/>
            <person name="Lloyd C.R."/>
            <person name="Lloyd D.M."/>
            <person name="Loveland J.E."/>
            <person name="Lovell J."/>
            <person name="Martin S."/>
            <person name="Mashreghi-Mohammadi M."/>
            <person name="Maslen G.L."/>
            <person name="Matthews L."/>
            <person name="McCann O.T."/>
            <person name="McLaren S.J."/>
            <person name="McLay K."/>
            <person name="McMurray A."/>
            <person name="Moore M.J.F."/>
            <person name="Mullikin J.C."/>
            <person name="Niblett D."/>
            <person name="Nickerson T."/>
            <person name="Novik K.L."/>
            <person name="Oliver K."/>
            <person name="Overton-Larty E.K."/>
            <person name="Parker A."/>
            <person name="Patel R."/>
            <person name="Pearce A.V."/>
            <person name="Peck A.I."/>
            <person name="Phillimore B.J.C.T."/>
            <person name="Phillips S."/>
            <person name="Plumb R.W."/>
            <person name="Porter K.M."/>
            <person name="Ramsey Y."/>
            <person name="Ranby S.A."/>
            <person name="Rice C.M."/>
            <person name="Ross M.T."/>
            <person name="Searle S.M."/>
            <person name="Sehra H.K."/>
            <person name="Sheridan E."/>
            <person name="Skuce C.D."/>
            <person name="Smith S."/>
            <person name="Smith M."/>
            <person name="Spraggon L."/>
            <person name="Squares S.L."/>
            <person name="Steward C.A."/>
            <person name="Sycamore N."/>
            <person name="Tamlyn-Hall G."/>
            <person name="Tester J."/>
            <person name="Theaker A.J."/>
            <person name="Thomas D.W."/>
            <person name="Thorpe A."/>
            <person name="Tracey A."/>
            <person name="Tromans A."/>
            <person name="Tubby B."/>
            <person name="Wall M."/>
            <person name="Wallis J.M."/>
            <person name="West A.P."/>
            <person name="White S.S."/>
            <person name="Whitehead S.L."/>
            <person name="Whittaker H."/>
            <person name="Wild A."/>
            <person name="Willey D.J."/>
            <person name="Wilmer T.E."/>
            <person name="Wood J.M."/>
            <person name="Wray P.W."/>
            <person name="Wyatt J.C."/>
            <person name="Young L."/>
            <person name="Younger R.M."/>
            <person name="Bentley D.R."/>
            <person name="Coulson A."/>
            <person name="Durbin R.M."/>
            <person name="Hubbard T."/>
            <person name="Sulston J.E."/>
            <person name="Dunham I."/>
            <person name="Rogers J."/>
            <person name="Beck S."/>
        </authorList>
    </citation>
    <scope>NUCLEOTIDE SEQUENCE [LARGE SCALE GENOMIC DNA]</scope>
</reference>
<organism>
    <name type="scientific">Homo sapiens</name>
    <name type="common">Human</name>
    <dbReference type="NCBI Taxonomy" id="9606"/>
    <lineage>
        <taxon>Eukaryota</taxon>
        <taxon>Metazoa</taxon>
        <taxon>Chordata</taxon>
        <taxon>Craniata</taxon>
        <taxon>Vertebrata</taxon>
        <taxon>Euteleostomi</taxon>
        <taxon>Mammalia</taxon>
        <taxon>Eutheria</taxon>
        <taxon>Euarchontoglires</taxon>
        <taxon>Primates</taxon>
        <taxon>Haplorrhini</taxon>
        <taxon>Catarrhini</taxon>
        <taxon>Hominidae</taxon>
        <taxon>Homo</taxon>
    </lineage>
</organism>
<keyword id="KW-0175">Coiled coil</keyword>
<keyword id="KW-0472">Membrane</keyword>
<keyword id="KW-0597">Phosphoprotein</keyword>
<keyword id="KW-1267">Proteomics identification</keyword>
<keyword id="KW-1185">Reference proteome</keyword>
<keyword id="KW-0732">Signal</keyword>
<keyword id="KW-0812">Transmembrane</keyword>
<keyword id="KW-1133">Transmembrane helix</keyword>
<comment type="subcellular location">
    <subcellularLocation>
        <location evidence="4">Membrane</location>
        <topology evidence="4">Single-pass membrane protein</topology>
    </subcellularLocation>
</comment>
<comment type="similarity">
    <text evidence="4">Belongs to the MTCL family.</text>
</comment>
<feature type="signal peptide" evidence="2">
    <location>
        <begin position="1"/>
        <end position="21"/>
    </location>
</feature>
<feature type="chain" id="PRO_0000271352" description="Microtubule cross-linking factor 3">
    <location>
        <begin position="22"/>
        <end position="947"/>
    </location>
</feature>
<feature type="transmembrane region" description="Helical" evidence="2">
    <location>
        <begin position="915"/>
        <end position="935"/>
    </location>
</feature>
<feature type="region of interest" description="Disordered" evidence="3">
    <location>
        <begin position="1"/>
        <end position="251"/>
    </location>
</feature>
<feature type="region of interest" description="Disordered" evidence="3">
    <location>
        <begin position="266"/>
        <end position="368"/>
    </location>
</feature>
<feature type="region of interest" description="Disordered" evidence="3">
    <location>
        <begin position="496"/>
        <end position="524"/>
    </location>
</feature>
<feature type="region of interest" description="Disordered" evidence="3">
    <location>
        <begin position="743"/>
        <end position="786"/>
    </location>
</feature>
<feature type="coiled-coil region" evidence="2">
    <location>
        <begin position="342"/>
        <end position="726"/>
    </location>
</feature>
<feature type="coiled-coil region" evidence="2">
    <location>
        <begin position="811"/>
        <end position="835"/>
    </location>
</feature>
<feature type="compositionally biased region" description="Low complexity" evidence="3">
    <location>
        <begin position="9"/>
        <end position="24"/>
    </location>
</feature>
<feature type="compositionally biased region" description="Low complexity" evidence="3">
    <location>
        <begin position="72"/>
        <end position="81"/>
    </location>
</feature>
<feature type="compositionally biased region" description="Low complexity" evidence="3">
    <location>
        <begin position="109"/>
        <end position="137"/>
    </location>
</feature>
<feature type="compositionally biased region" description="Basic and acidic residues" evidence="3">
    <location>
        <begin position="141"/>
        <end position="151"/>
    </location>
</feature>
<feature type="compositionally biased region" description="Gly residues" evidence="3">
    <location>
        <begin position="164"/>
        <end position="180"/>
    </location>
</feature>
<feature type="compositionally biased region" description="Low complexity" evidence="3">
    <location>
        <begin position="214"/>
        <end position="236"/>
    </location>
</feature>
<feature type="compositionally biased region" description="Gly residues" evidence="3">
    <location>
        <begin position="237"/>
        <end position="248"/>
    </location>
</feature>
<feature type="compositionally biased region" description="Low complexity" evidence="3">
    <location>
        <begin position="287"/>
        <end position="297"/>
    </location>
</feature>
<feature type="compositionally biased region" description="Low complexity" evidence="3">
    <location>
        <begin position="304"/>
        <end position="325"/>
    </location>
</feature>
<feature type="compositionally biased region" description="Basic and acidic residues" evidence="3">
    <location>
        <begin position="355"/>
        <end position="368"/>
    </location>
</feature>
<feature type="compositionally biased region" description="Basic and acidic residues" evidence="3">
    <location>
        <begin position="496"/>
        <end position="513"/>
    </location>
</feature>
<feature type="compositionally biased region" description="Basic and acidic residues" evidence="3">
    <location>
        <begin position="747"/>
        <end position="768"/>
    </location>
</feature>
<feature type="modified residue" description="Phosphoserine" evidence="1">
    <location>
        <position position="569"/>
    </location>
</feature>
<feature type="modified residue" description="Phosphoserine" evidence="1">
    <location>
        <position position="781"/>
    </location>
</feature>
<proteinExistence type="evidence at protein level"/>
<accession>Q5TF21</accession>